<keyword id="KW-0413">Isomerase</keyword>
<keyword id="KW-0460">Magnesium</keyword>
<keyword id="KW-0479">Metal-binding</keyword>
<keyword id="KW-0597">Phosphoprotein</keyword>
<organism>
    <name type="scientific">Lacticaseibacillus casei (strain BL23)</name>
    <name type="common">Lactobacillus casei</name>
    <dbReference type="NCBI Taxonomy" id="543734"/>
    <lineage>
        <taxon>Bacteria</taxon>
        <taxon>Bacillati</taxon>
        <taxon>Bacillota</taxon>
        <taxon>Bacilli</taxon>
        <taxon>Lactobacillales</taxon>
        <taxon>Lactobacillaceae</taxon>
        <taxon>Lacticaseibacillus</taxon>
    </lineage>
</organism>
<reference key="1">
    <citation type="submission" date="2008-06" db="EMBL/GenBank/DDBJ databases">
        <title>Lactobacillus casei BL23 complete genome sequence.</title>
        <authorList>
            <person name="Maze A."/>
            <person name="Boel G."/>
            <person name="Bourand A."/>
            <person name="Loux V."/>
            <person name="Gibrat J.F."/>
            <person name="Zuniga M."/>
            <person name="Hartke A."/>
            <person name="Deutscher J."/>
        </authorList>
    </citation>
    <scope>NUCLEOTIDE SEQUENCE [LARGE SCALE GENOMIC DNA]</scope>
    <source>
        <strain>BL23</strain>
    </source>
</reference>
<gene>
    <name evidence="1" type="primary">glmM</name>
    <name type="ordered locus">LCABL_11820</name>
</gene>
<sequence>MTKYFGTDGVRGIANKELSPEMAFRLGRTGGYVLTQHKEDASRRPLVLVARDTRISGQMLADALIAGLLSVGIEVLDLGVITTPAVAYLIKIQGADAGIQISASHNPVADNGIKFFGADGYKLSDDTEEEIEALLDAPEDKLPRPAAEGLGTVDDYPEGALKYTQFLEQTLADDLSGIHVCLDGANGATSGLVSRIFADLETDFDTMAISPDGLNINANVGSTHPQALSKFVVEKGADVGLAFDGDGDRCIAVDEQGNIVDGDKIMFILGSYMKSQGRLKQDTVVTTVMSNLGLYKALEANGMKSVQTAVGDRHVVEAMRKDGYNIGGEQSGHVILFDYHNTGDGMLTGIHLLNVMKKTGKKLSELAAPVQDYPQKLVNVKVADKENWQAYPEIQSAIDTVEKEMAGDGRVLVRPSGTEPLLRVMAEAKTEDLVSRYVDQIVDVVKQEMGSKED</sequence>
<name>GLMM_LACCB</name>
<feature type="chain" id="PRO_1000201112" description="Phosphoglucosamine mutase">
    <location>
        <begin position="1"/>
        <end position="454"/>
    </location>
</feature>
<feature type="active site" description="Phosphoserine intermediate" evidence="1">
    <location>
        <position position="104"/>
    </location>
</feature>
<feature type="binding site" description="via phosphate group" evidence="1">
    <location>
        <position position="104"/>
    </location>
    <ligand>
        <name>Mg(2+)</name>
        <dbReference type="ChEBI" id="CHEBI:18420"/>
    </ligand>
</feature>
<feature type="binding site" evidence="1">
    <location>
        <position position="244"/>
    </location>
    <ligand>
        <name>Mg(2+)</name>
        <dbReference type="ChEBI" id="CHEBI:18420"/>
    </ligand>
</feature>
<feature type="binding site" evidence="1">
    <location>
        <position position="246"/>
    </location>
    <ligand>
        <name>Mg(2+)</name>
        <dbReference type="ChEBI" id="CHEBI:18420"/>
    </ligand>
</feature>
<feature type="binding site" evidence="1">
    <location>
        <position position="248"/>
    </location>
    <ligand>
        <name>Mg(2+)</name>
        <dbReference type="ChEBI" id="CHEBI:18420"/>
    </ligand>
</feature>
<feature type="modified residue" description="Phosphoserine" evidence="1">
    <location>
        <position position="104"/>
    </location>
</feature>
<protein>
    <recommendedName>
        <fullName evidence="1">Phosphoglucosamine mutase</fullName>
        <ecNumber evidence="1">5.4.2.10</ecNumber>
    </recommendedName>
</protein>
<accession>B3WD16</accession>
<dbReference type="EC" id="5.4.2.10" evidence="1"/>
<dbReference type="EMBL" id="FM177140">
    <property type="protein sequence ID" value="CAQ66267.1"/>
    <property type="molecule type" value="Genomic_DNA"/>
</dbReference>
<dbReference type="SMR" id="B3WD16"/>
<dbReference type="KEGG" id="lcb:LCABL_11820"/>
<dbReference type="HOGENOM" id="CLU_016950_7_0_9"/>
<dbReference type="BRENDA" id="5.4.2.10">
    <property type="organism ID" value="2854"/>
</dbReference>
<dbReference type="GO" id="GO:0005829">
    <property type="term" value="C:cytosol"/>
    <property type="evidence" value="ECO:0007669"/>
    <property type="project" value="TreeGrafter"/>
</dbReference>
<dbReference type="GO" id="GO:0000287">
    <property type="term" value="F:magnesium ion binding"/>
    <property type="evidence" value="ECO:0007669"/>
    <property type="project" value="UniProtKB-UniRule"/>
</dbReference>
<dbReference type="GO" id="GO:0008966">
    <property type="term" value="F:phosphoglucosamine mutase activity"/>
    <property type="evidence" value="ECO:0007669"/>
    <property type="project" value="UniProtKB-UniRule"/>
</dbReference>
<dbReference type="GO" id="GO:0004615">
    <property type="term" value="F:phosphomannomutase activity"/>
    <property type="evidence" value="ECO:0007669"/>
    <property type="project" value="TreeGrafter"/>
</dbReference>
<dbReference type="GO" id="GO:0005975">
    <property type="term" value="P:carbohydrate metabolic process"/>
    <property type="evidence" value="ECO:0007669"/>
    <property type="project" value="InterPro"/>
</dbReference>
<dbReference type="GO" id="GO:0009252">
    <property type="term" value="P:peptidoglycan biosynthetic process"/>
    <property type="evidence" value="ECO:0007669"/>
    <property type="project" value="TreeGrafter"/>
</dbReference>
<dbReference type="GO" id="GO:0006048">
    <property type="term" value="P:UDP-N-acetylglucosamine biosynthetic process"/>
    <property type="evidence" value="ECO:0007669"/>
    <property type="project" value="TreeGrafter"/>
</dbReference>
<dbReference type="CDD" id="cd05802">
    <property type="entry name" value="GlmM"/>
    <property type="match status" value="1"/>
</dbReference>
<dbReference type="FunFam" id="3.30.310.50:FF:000001">
    <property type="entry name" value="Phosphoglucosamine mutase"/>
    <property type="match status" value="1"/>
</dbReference>
<dbReference type="FunFam" id="3.40.120.10:FF:000001">
    <property type="entry name" value="Phosphoglucosamine mutase"/>
    <property type="match status" value="1"/>
</dbReference>
<dbReference type="FunFam" id="3.40.120.10:FF:000002">
    <property type="entry name" value="Phosphoglucosamine mutase"/>
    <property type="match status" value="1"/>
</dbReference>
<dbReference type="Gene3D" id="3.40.120.10">
    <property type="entry name" value="Alpha-D-Glucose-1,6-Bisphosphate, subunit A, domain 3"/>
    <property type="match status" value="3"/>
</dbReference>
<dbReference type="Gene3D" id="3.30.310.50">
    <property type="entry name" value="Alpha-D-phosphohexomutase, C-terminal domain"/>
    <property type="match status" value="1"/>
</dbReference>
<dbReference type="HAMAP" id="MF_01554_B">
    <property type="entry name" value="GlmM_B"/>
    <property type="match status" value="1"/>
</dbReference>
<dbReference type="InterPro" id="IPR005844">
    <property type="entry name" value="A-D-PHexomutase_a/b/a-I"/>
</dbReference>
<dbReference type="InterPro" id="IPR016055">
    <property type="entry name" value="A-D-PHexomutase_a/b/a-I/II/III"/>
</dbReference>
<dbReference type="InterPro" id="IPR005845">
    <property type="entry name" value="A-D-PHexomutase_a/b/a-II"/>
</dbReference>
<dbReference type="InterPro" id="IPR005846">
    <property type="entry name" value="A-D-PHexomutase_a/b/a-III"/>
</dbReference>
<dbReference type="InterPro" id="IPR005843">
    <property type="entry name" value="A-D-PHexomutase_C"/>
</dbReference>
<dbReference type="InterPro" id="IPR036900">
    <property type="entry name" value="A-D-PHexomutase_C_sf"/>
</dbReference>
<dbReference type="InterPro" id="IPR016066">
    <property type="entry name" value="A-D-PHexomutase_CS"/>
</dbReference>
<dbReference type="InterPro" id="IPR005841">
    <property type="entry name" value="Alpha-D-phosphohexomutase_SF"/>
</dbReference>
<dbReference type="InterPro" id="IPR006352">
    <property type="entry name" value="GlmM_bact"/>
</dbReference>
<dbReference type="InterPro" id="IPR050060">
    <property type="entry name" value="Phosphoglucosamine_mutase"/>
</dbReference>
<dbReference type="NCBIfam" id="TIGR01455">
    <property type="entry name" value="glmM"/>
    <property type="match status" value="1"/>
</dbReference>
<dbReference type="PANTHER" id="PTHR42946:SF1">
    <property type="entry name" value="PHOSPHOGLUCOMUTASE (ALPHA-D-GLUCOSE-1,6-BISPHOSPHATE-DEPENDENT)"/>
    <property type="match status" value="1"/>
</dbReference>
<dbReference type="PANTHER" id="PTHR42946">
    <property type="entry name" value="PHOSPHOHEXOSE MUTASE"/>
    <property type="match status" value="1"/>
</dbReference>
<dbReference type="Pfam" id="PF02878">
    <property type="entry name" value="PGM_PMM_I"/>
    <property type="match status" value="1"/>
</dbReference>
<dbReference type="Pfam" id="PF02879">
    <property type="entry name" value="PGM_PMM_II"/>
    <property type="match status" value="1"/>
</dbReference>
<dbReference type="Pfam" id="PF02880">
    <property type="entry name" value="PGM_PMM_III"/>
    <property type="match status" value="1"/>
</dbReference>
<dbReference type="Pfam" id="PF00408">
    <property type="entry name" value="PGM_PMM_IV"/>
    <property type="match status" value="1"/>
</dbReference>
<dbReference type="PRINTS" id="PR00509">
    <property type="entry name" value="PGMPMM"/>
</dbReference>
<dbReference type="SUPFAM" id="SSF55957">
    <property type="entry name" value="Phosphoglucomutase, C-terminal domain"/>
    <property type="match status" value="1"/>
</dbReference>
<dbReference type="SUPFAM" id="SSF53738">
    <property type="entry name" value="Phosphoglucomutase, first 3 domains"/>
    <property type="match status" value="3"/>
</dbReference>
<dbReference type="PROSITE" id="PS00710">
    <property type="entry name" value="PGM_PMM"/>
    <property type="match status" value="1"/>
</dbReference>
<proteinExistence type="inferred from homology"/>
<comment type="function">
    <text evidence="1">Catalyzes the conversion of glucosamine-6-phosphate to glucosamine-1-phosphate.</text>
</comment>
<comment type="catalytic activity">
    <reaction evidence="1">
        <text>alpha-D-glucosamine 1-phosphate = D-glucosamine 6-phosphate</text>
        <dbReference type="Rhea" id="RHEA:23424"/>
        <dbReference type="ChEBI" id="CHEBI:58516"/>
        <dbReference type="ChEBI" id="CHEBI:58725"/>
        <dbReference type="EC" id="5.4.2.10"/>
    </reaction>
</comment>
<comment type="cofactor">
    <cofactor evidence="1">
        <name>Mg(2+)</name>
        <dbReference type="ChEBI" id="CHEBI:18420"/>
    </cofactor>
    <text evidence="1">Binds 1 Mg(2+) ion per subunit.</text>
</comment>
<comment type="PTM">
    <text evidence="1">Activated by phosphorylation.</text>
</comment>
<comment type="similarity">
    <text evidence="1">Belongs to the phosphohexose mutase family.</text>
</comment>
<evidence type="ECO:0000255" key="1">
    <source>
        <dbReference type="HAMAP-Rule" id="MF_01554"/>
    </source>
</evidence>